<reference key="1">
    <citation type="journal article" date="2000" name="Nature">
        <title>Sequence and analysis of chromosome 1 of the plant Arabidopsis thaliana.</title>
        <authorList>
            <person name="Theologis A."/>
            <person name="Ecker J.R."/>
            <person name="Palm C.J."/>
            <person name="Federspiel N.A."/>
            <person name="Kaul S."/>
            <person name="White O."/>
            <person name="Alonso J."/>
            <person name="Altafi H."/>
            <person name="Araujo R."/>
            <person name="Bowman C.L."/>
            <person name="Brooks S.Y."/>
            <person name="Buehler E."/>
            <person name="Chan A."/>
            <person name="Chao Q."/>
            <person name="Chen H."/>
            <person name="Cheuk R.F."/>
            <person name="Chin C.W."/>
            <person name="Chung M.K."/>
            <person name="Conn L."/>
            <person name="Conway A.B."/>
            <person name="Conway A.R."/>
            <person name="Creasy T.H."/>
            <person name="Dewar K."/>
            <person name="Dunn P."/>
            <person name="Etgu P."/>
            <person name="Feldblyum T.V."/>
            <person name="Feng J.-D."/>
            <person name="Fong B."/>
            <person name="Fujii C.Y."/>
            <person name="Gill J.E."/>
            <person name="Goldsmith A.D."/>
            <person name="Haas B."/>
            <person name="Hansen N.F."/>
            <person name="Hughes B."/>
            <person name="Huizar L."/>
            <person name="Hunter J.L."/>
            <person name="Jenkins J."/>
            <person name="Johnson-Hopson C."/>
            <person name="Khan S."/>
            <person name="Khaykin E."/>
            <person name="Kim C.J."/>
            <person name="Koo H.L."/>
            <person name="Kremenetskaia I."/>
            <person name="Kurtz D.B."/>
            <person name="Kwan A."/>
            <person name="Lam B."/>
            <person name="Langin-Hooper S."/>
            <person name="Lee A."/>
            <person name="Lee J.M."/>
            <person name="Lenz C.A."/>
            <person name="Li J.H."/>
            <person name="Li Y.-P."/>
            <person name="Lin X."/>
            <person name="Liu S.X."/>
            <person name="Liu Z.A."/>
            <person name="Luros J.S."/>
            <person name="Maiti R."/>
            <person name="Marziali A."/>
            <person name="Militscher J."/>
            <person name="Miranda M."/>
            <person name="Nguyen M."/>
            <person name="Nierman W.C."/>
            <person name="Osborne B.I."/>
            <person name="Pai G."/>
            <person name="Peterson J."/>
            <person name="Pham P.K."/>
            <person name="Rizzo M."/>
            <person name="Rooney T."/>
            <person name="Rowley D."/>
            <person name="Sakano H."/>
            <person name="Salzberg S.L."/>
            <person name="Schwartz J.R."/>
            <person name="Shinn P."/>
            <person name="Southwick A.M."/>
            <person name="Sun H."/>
            <person name="Tallon L.J."/>
            <person name="Tambunga G."/>
            <person name="Toriumi M.J."/>
            <person name="Town C.D."/>
            <person name="Utterback T."/>
            <person name="Van Aken S."/>
            <person name="Vaysberg M."/>
            <person name="Vysotskaia V.S."/>
            <person name="Walker M."/>
            <person name="Wu D."/>
            <person name="Yu G."/>
            <person name="Fraser C.M."/>
            <person name="Venter J.C."/>
            <person name="Davis R.W."/>
        </authorList>
    </citation>
    <scope>NUCLEOTIDE SEQUENCE [LARGE SCALE GENOMIC DNA]</scope>
    <source>
        <strain>cv. Columbia</strain>
    </source>
</reference>
<reference key="2">
    <citation type="journal article" date="2017" name="Plant J.">
        <title>Araport11: a complete reannotation of the Arabidopsis thaliana reference genome.</title>
        <authorList>
            <person name="Cheng C.Y."/>
            <person name="Krishnakumar V."/>
            <person name="Chan A.P."/>
            <person name="Thibaud-Nissen F."/>
            <person name="Schobel S."/>
            <person name="Town C.D."/>
        </authorList>
    </citation>
    <scope>GENOME REANNOTATION</scope>
    <source>
        <strain>cv. Columbia</strain>
    </source>
</reference>
<reference key="3">
    <citation type="journal article" date="2003" name="Science">
        <title>Empirical analysis of transcriptional activity in the Arabidopsis genome.</title>
        <authorList>
            <person name="Yamada K."/>
            <person name="Lim J."/>
            <person name="Dale J.M."/>
            <person name="Chen H."/>
            <person name="Shinn P."/>
            <person name="Palm C.J."/>
            <person name="Southwick A.M."/>
            <person name="Wu H.C."/>
            <person name="Kim C.J."/>
            <person name="Nguyen M."/>
            <person name="Pham P.K."/>
            <person name="Cheuk R.F."/>
            <person name="Karlin-Newmann G."/>
            <person name="Liu S.X."/>
            <person name="Lam B."/>
            <person name="Sakano H."/>
            <person name="Wu T."/>
            <person name="Yu G."/>
            <person name="Miranda M."/>
            <person name="Quach H.L."/>
            <person name="Tripp M."/>
            <person name="Chang C.H."/>
            <person name="Lee J.M."/>
            <person name="Toriumi M.J."/>
            <person name="Chan M.M."/>
            <person name="Tang C.C."/>
            <person name="Onodera C.S."/>
            <person name="Deng J.M."/>
            <person name="Akiyama K."/>
            <person name="Ansari Y."/>
            <person name="Arakawa T."/>
            <person name="Banh J."/>
            <person name="Banno F."/>
            <person name="Bowser L."/>
            <person name="Brooks S.Y."/>
            <person name="Carninci P."/>
            <person name="Chao Q."/>
            <person name="Choy N."/>
            <person name="Enju A."/>
            <person name="Goldsmith A.D."/>
            <person name="Gurjal M."/>
            <person name="Hansen N.F."/>
            <person name="Hayashizaki Y."/>
            <person name="Johnson-Hopson C."/>
            <person name="Hsuan V.W."/>
            <person name="Iida K."/>
            <person name="Karnes M."/>
            <person name="Khan S."/>
            <person name="Koesema E."/>
            <person name="Ishida J."/>
            <person name="Jiang P.X."/>
            <person name="Jones T."/>
            <person name="Kawai J."/>
            <person name="Kamiya A."/>
            <person name="Meyers C."/>
            <person name="Nakajima M."/>
            <person name="Narusaka M."/>
            <person name="Seki M."/>
            <person name="Sakurai T."/>
            <person name="Satou M."/>
            <person name="Tamse R."/>
            <person name="Vaysberg M."/>
            <person name="Wallender E.K."/>
            <person name="Wong C."/>
            <person name="Yamamura Y."/>
            <person name="Yuan S."/>
            <person name="Shinozaki K."/>
            <person name="Davis R.W."/>
            <person name="Theologis A."/>
            <person name="Ecker J.R."/>
        </authorList>
    </citation>
    <scope>NUCLEOTIDE SEQUENCE [LARGE SCALE MRNA]</scope>
    <source>
        <strain>cv. Columbia</strain>
    </source>
</reference>
<reference key="4">
    <citation type="journal article" date="2005" name="Plant J.">
        <title>High-throughput protein localization in Arabidopsis using Agrobacterium-mediated transient expression of GFP-ORF fusions.</title>
        <authorList>
            <person name="Koroleva O.A."/>
            <person name="Tomlinson M.L."/>
            <person name="Leader D."/>
            <person name="Shaw P."/>
            <person name="Doonan J.H."/>
        </authorList>
    </citation>
    <scope>SUBCELLULAR LOCATION</scope>
</reference>
<reference key="5">
    <citation type="journal article" date="2006" name="Plant Physiol.">
        <title>Identification and characterization of the Arabidopsis orthologs of nuclear transport factor 2, the nuclear import factor of ran.</title>
        <authorList>
            <person name="Zhao Q."/>
            <person name="Leung S."/>
            <person name="Corbett A.H."/>
            <person name="Meier I."/>
        </authorList>
    </citation>
    <scope>FUNCTION</scope>
    <scope>MUTAGENESIS OF GLU-38 AND GLU-91</scope>
    <scope>TISSUE SPECIFICITY</scope>
    <scope>INTERACTION WITH RAN1</scope>
    <scope>SUBCELLULAR LOCATION</scope>
    <scope>GENE FAMILY</scope>
    <scope>NOMENCLATURE</scope>
    <source>
        <strain>cv. Columbia</strain>
    </source>
</reference>
<reference key="6">
    <citation type="journal article" date="2012" name="Mol. Cell. Proteomics">
        <title>Comparative large-scale characterisation of plant vs. mammal proteins reveals similar and idiosyncratic N-alpha acetylation features.</title>
        <authorList>
            <person name="Bienvenut W.V."/>
            <person name="Sumpton D."/>
            <person name="Martinez A."/>
            <person name="Lilla S."/>
            <person name="Espagne C."/>
            <person name="Meinnel T."/>
            <person name="Giglione C."/>
        </authorList>
    </citation>
    <scope>ACETYLATION [LARGE SCALE ANALYSIS] AT MET-1</scope>
    <scope>CLEAVAGE OF INITIATOR METHIONINE [LARGE SCALE ANALYSIS]</scope>
    <scope>IDENTIFICATION BY MASS SPECTROMETRY [LARGE SCALE ANALYSIS]</scope>
</reference>
<sequence length="122" mass="13527">MDPDAVAKAFVEHYYSTFDANRPGLVSLYQEGSMLTFEGQKIQGSQNIVAKLTGLPFQQCKHNITTVDCQPSGPAGGMLVFVSGNLQLAGEQHALKFSQMFHLISNQGNYYVFNDIFRLNYA</sequence>
<organism>
    <name type="scientific">Arabidopsis thaliana</name>
    <name type="common">Mouse-ear cress</name>
    <dbReference type="NCBI Taxonomy" id="3702"/>
    <lineage>
        <taxon>Eukaryota</taxon>
        <taxon>Viridiplantae</taxon>
        <taxon>Streptophyta</taxon>
        <taxon>Embryophyta</taxon>
        <taxon>Tracheophyta</taxon>
        <taxon>Spermatophyta</taxon>
        <taxon>Magnoliopsida</taxon>
        <taxon>eudicotyledons</taxon>
        <taxon>Gunneridae</taxon>
        <taxon>Pentapetalae</taxon>
        <taxon>rosids</taxon>
        <taxon>malvids</taxon>
        <taxon>Brassicales</taxon>
        <taxon>Brassicaceae</taxon>
        <taxon>Camelineae</taxon>
        <taxon>Arabidopsis</taxon>
    </lineage>
</organism>
<keyword id="KW-0007">Acetylation</keyword>
<keyword id="KW-0963">Cytoplasm</keyword>
<keyword id="KW-0539">Nucleus</keyword>
<keyword id="KW-1185">Reference proteome</keyword>
<name>NTF2A_ARATH</name>
<accession>Q9FZK4</accession>
<dbReference type="EMBL" id="AC004557">
    <property type="protein sequence ID" value="AAF99749.1"/>
    <property type="molecule type" value="Genomic_DNA"/>
</dbReference>
<dbReference type="EMBL" id="CP002684">
    <property type="protein sequence ID" value="AEE30805.1"/>
    <property type="molecule type" value="Genomic_DNA"/>
</dbReference>
<dbReference type="EMBL" id="AY042889">
    <property type="protein sequence ID" value="AAK68829.1"/>
    <property type="molecule type" value="mRNA"/>
</dbReference>
<dbReference type="EMBL" id="AY072473">
    <property type="protein sequence ID" value="AAL66888.1"/>
    <property type="molecule type" value="mRNA"/>
</dbReference>
<dbReference type="PIR" id="H86398">
    <property type="entry name" value="H86398"/>
</dbReference>
<dbReference type="RefSeq" id="NP_174051.1">
    <property type="nucleotide sequence ID" value="NM_102493.3"/>
</dbReference>
<dbReference type="SMR" id="Q9FZK4"/>
<dbReference type="FunCoup" id="Q9FZK4">
    <property type="interactions" value="4619"/>
</dbReference>
<dbReference type="IntAct" id="Q9FZK4">
    <property type="interactions" value="1"/>
</dbReference>
<dbReference type="STRING" id="3702.Q9FZK4"/>
<dbReference type="iPTMnet" id="Q9FZK4"/>
<dbReference type="PaxDb" id="3702-AT1G27310.1"/>
<dbReference type="ProteomicsDB" id="248937"/>
<dbReference type="EnsemblPlants" id="AT1G27310.1">
    <property type="protein sequence ID" value="AT1G27310.1"/>
    <property type="gene ID" value="AT1G27310"/>
</dbReference>
<dbReference type="GeneID" id="839620"/>
<dbReference type="Gramene" id="AT1G27310.1">
    <property type="protein sequence ID" value="AT1G27310.1"/>
    <property type="gene ID" value="AT1G27310"/>
</dbReference>
<dbReference type="KEGG" id="ath:AT1G27310"/>
<dbReference type="Araport" id="AT1G27310"/>
<dbReference type="TAIR" id="AT1G27310">
    <property type="gene designation" value="NTF2A"/>
</dbReference>
<dbReference type="eggNOG" id="KOG2104">
    <property type="taxonomic scope" value="Eukaryota"/>
</dbReference>
<dbReference type="HOGENOM" id="CLU_131642_0_0_1"/>
<dbReference type="InParanoid" id="Q9FZK4"/>
<dbReference type="OMA" id="HIKFSQM"/>
<dbReference type="OrthoDB" id="6507044at2759"/>
<dbReference type="PhylomeDB" id="Q9FZK4"/>
<dbReference type="PRO" id="PR:Q9FZK4"/>
<dbReference type="Proteomes" id="UP000006548">
    <property type="component" value="Chromosome 1"/>
</dbReference>
<dbReference type="ExpressionAtlas" id="Q9FZK4">
    <property type="expression patterns" value="baseline and differential"/>
</dbReference>
<dbReference type="GO" id="GO:0005737">
    <property type="term" value="C:cytoplasm"/>
    <property type="evidence" value="ECO:0000314"/>
    <property type="project" value="UniProtKB"/>
</dbReference>
<dbReference type="GO" id="GO:0005829">
    <property type="term" value="C:cytosol"/>
    <property type="evidence" value="ECO:0007005"/>
    <property type="project" value="TAIR"/>
</dbReference>
<dbReference type="GO" id="GO:0005635">
    <property type="term" value="C:nuclear envelope"/>
    <property type="evidence" value="ECO:0000314"/>
    <property type="project" value="TAIR"/>
</dbReference>
<dbReference type="GO" id="GO:0005634">
    <property type="term" value="C:nucleus"/>
    <property type="evidence" value="ECO:0000314"/>
    <property type="project" value="UniProtKB"/>
</dbReference>
<dbReference type="GO" id="GO:0031267">
    <property type="term" value="F:small GTPase binding"/>
    <property type="evidence" value="ECO:0000353"/>
    <property type="project" value="TAIR"/>
</dbReference>
<dbReference type="GO" id="GO:0006606">
    <property type="term" value="P:protein import into nucleus"/>
    <property type="evidence" value="ECO:0000314"/>
    <property type="project" value="UniProtKB"/>
</dbReference>
<dbReference type="CDD" id="cd00780">
    <property type="entry name" value="NTF2"/>
    <property type="match status" value="1"/>
</dbReference>
<dbReference type="FunFam" id="3.10.450.50:FF:000005">
    <property type="entry name" value="Nuclear transport factor 2"/>
    <property type="match status" value="1"/>
</dbReference>
<dbReference type="Gene3D" id="3.10.450.50">
    <property type="match status" value="1"/>
</dbReference>
<dbReference type="InterPro" id="IPR045875">
    <property type="entry name" value="NTF2"/>
</dbReference>
<dbReference type="InterPro" id="IPR032710">
    <property type="entry name" value="NTF2-like_dom_sf"/>
</dbReference>
<dbReference type="InterPro" id="IPR002075">
    <property type="entry name" value="NTF2_dom"/>
</dbReference>
<dbReference type="InterPro" id="IPR018222">
    <property type="entry name" value="Nuclear_transport_factor_2_euk"/>
</dbReference>
<dbReference type="PANTHER" id="PTHR12612">
    <property type="entry name" value="NUCLEAR TRANSPORT FACTOR 2"/>
    <property type="match status" value="1"/>
</dbReference>
<dbReference type="Pfam" id="PF02136">
    <property type="entry name" value="NTF2"/>
    <property type="match status" value="1"/>
</dbReference>
<dbReference type="SUPFAM" id="SSF54427">
    <property type="entry name" value="NTF2-like"/>
    <property type="match status" value="1"/>
</dbReference>
<dbReference type="PROSITE" id="PS50177">
    <property type="entry name" value="NTF2_DOMAIN"/>
    <property type="match status" value="1"/>
</dbReference>
<comment type="function">
    <text evidence="3">Facilitates protein transport into the nucleus. Interacts with various nucleoporins and with Ran-GDP. Could be part of a multicomponent system of cytosolic factors that assemble at the pore complex during nuclear import.</text>
</comment>
<comment type="subunit">
    <text evidence="3">Interacts with RAN1.</text>
</comment>
<comment type="subcellular location">
    <subcellularLocation>
        <location evidence="2 3">Cytoplasm</location>
    </subcellularLocation>
    <subcellularLocation>
        <location evidence="2 3">Nucleus</location>
    </subcellularLocation>
    <subcellularLocation>
        <location evidence="3">Nucleus envelope</location>
    </subcellularLocation>
    <text evidence="3">Accumulates at the nuclear rim. Excluded from the nucleolus.</text>
</comment>
<comment type="tissue specificity">
    <text evidence="3">Expressed in roots, stems, leaves and flowers, and, at low levels, in siliques.</text>
</comment>
<feature type="chain" id="PRO_0000441932" description="Nuclear transport factor 2A">
    <location>
        <begin position="1"/>
        <end position="122"/>
    </location>
</feature>
<feature type="initiator methionine" description="Removed; alternate" evidence="7">
    <location>
        <position position="1"/>
    </location>
</feature>
<feature type="chain" id="PRO_0000443352" description="Nuclear transport factor 2A, N-terminally processed">
    <location>
        <begin position="2"/>
        <end position="122"/>
    </location>
</feature>
<feature type="domain" description="NTF2" evidence="1">
    <location>
        <begin position="6"/>
        <end position="119"/>
    </location>
</feature>
<feature type="modified residue" description="N-acetylmethionine" evidence="7">
    <location>
        <position position="1"/>
    </location>
</feature>
<feature type="mutagenesis site" description="Loss of interaction with RAN1 leading to impaired nuclear protein import activity." evidence="3">
    <original>E</original>
    <variation>K</variation>
    <location>
        <position position="38"/>
    </location>
</feature>
<feature type="mutagenesis site" description="Loss of interaction with RAN1 leading to impaired nuclear protein import activity." evidence="3">
    <original>E</original>
    <variation>K</variation>
    <location>
        <position position="91"/>
    </location>
</feature>
<protein>
    <recommendedName>
        <fullName evidence="4">Nuclear transport factor 2A</fullName>
        <shortName evidence="4">AtNTF2a</shortName>
    </recommendedName>
    <component>
        <recommendedName>
            <fullName>Nuclear transport factor 2A, N-terminally processed</fullName>
        </recommendedName>
    </component>
</protein>
<evidence type="ECO:0000255" key="1">
    <source>
        <dbReference type="PROSITE-ProRule" id="PRU00137"/>
    </source>
</evidence>
<evidence type="ECO:0000269" key="2">
    <source>
    </source>
</evidence>
<evidence type="ECO:0000269" key="3">
    <source>
    </source>
</evidence>
<evidence type="ECO:0000303" key="4">
    <source>
    </source>
</evidence>
<evidence type="ECO:0000312" key="5">
    <source>
        <dbReference type="Araport" id="AT1G27310"/>
    </source>
</evidence>
<evidence type="ECO:0000312" key="6">
    <source>
        <dbReference type="EMBL" id="AAK68829.1"/>
    </source>
</evidence>
<evidence type="ECO:0007744" key="7">
    <source>
    </source>
</evidence>
<gene>
    <name evidence="4" type="primary">NTF2A</name>
    <name evidence="5" type="ordered locus">At1g27310</name>
    <name evidence="6" type="ORF">F17L21.10</name>
</gene>
<proteinExistence type="evidence at protein level"/>